<comment type="function">
    <text evidence="1">Produces ATP from ADP in the presence of a proton gradient across the membrane. The catalytic sites are hosted primarily by the beta subunits.</text>
</comment>
<comment type="catalytic activity">
    <reaction evidence="1">
        <text>ATP + H2O + 4 H(+)(in) = ADP + phosphate + 5 H(+)(out)</text>
        <dbReference type="Rhea" id="RHEA:57720"/>
        <dbReference type="ChEBI" id="CHEBI:15377"/>
        <dbReference type="ChEBI" id="CHEBI:15378"/>
        <dbReference type="ChEBI" id="CHEBI:30616"/>
        <dbReference type="ChEBI" id="CHEBI:43474"/>
        <dbReference type="ChEBI" id="CHEBI:456216"/>
        <dbReference type="EC" id="7.1.2.2"/>
    </reaction>
</comment>
<comment type="subunit">
    <text evidence="1">F-type ATPases have 2 components, CF(1) - the catalytic core - and CF(0) - the membrane proton channel. CF(1) has five subunits: alpha(3), beta(3), gamma(1), delta(1), epsilon(1). CF(0) has four main subunits: a(1), b(1), b'(1) and c(9-12).</text>
</comment>
<comment type="subcellular location">
    <subcellularLocation>
        <location evidence="1">Plastid</location>
        <location evidence="1">Chloroplast thylakoid membrane</location>
        <topology evidence="1">Peripheral membrane protein</topology>
    </subcellularLocation>
</comment>
<comment type="similarity">
    <text evidence="1">Belongs to the ATPase alpha/beta chains family.</text>
</comment>
<accession>P26530</accession>
<proteinExistence type="inferred from homology"/>
<sequence>MRIDPTTSGSGVSTLEKKNPGRVVQIIGPVLDVAFPPGKMPNIYNALVVQGRDSVGQPINVACEVQQLLGNNRVRAVAMSATEGLTRGMEVIDTGAPISVPVGGATLGRIFNVLGAAVDNLGPVDTSTTSPIHRSAPAFIQLDTKLSIFETGIKVVDLLAPYRRGGKIGLFGGAGVGKTVLIMELINNIAKAHGGVSVFGGVGERTREGNDLYMEMKESGVINEENIAESKVALVYGQMNEPPGARMRVGLTALTMAEYFRDVNEQDVLLFIDNIFRFVQAGSEVSALLGRMPSAVGYQPTLSTEMGSLQERITSTKEGSITSIQAVYVPADDLTDPAPATTFAHLDATTVLSRGLAAKGIYPAVDPLDSTSTMLQPRIVGEEHYETAQRVKQTLQRYKELQDIIAILGLDELSEEDRLLVARARKIERFLSQPFFVAEVFTGSPGKYVGLAETIRGFQLILSGELDGLPEQAFYLVGNIDEATAKAMKLEMESNLKK</sequence>
<reference key="1">
    <citation type="journal article" date="1992" name="Science">
        <title>Tentoxin sensitivity of chloroplasts determined by codon 83 of beta subunit of proton-ATPase.</title>
        <authorList>
            <person name="Avni A."/>
            <person name="Anderson J.D."/>
            <person name="Holland N."/>
            <person name="Rochaix J.-D."/>
            <person name="Gromet-Elhanan Z."/>
            <person name="Edelman M."/>
        </authorList>
    </citation>
    <scope>NUCLEOTIDE SEQUENCE [GENOMIC DNA]</scope>
</reference>
<geneLocation type="chloroplast"/>
<dbReference type="EC" id="7.1.2.2" evidence="1"/>
<dbReference type="EMBL" id="X61318">
    <property type="protein sequence ID" value="CAA43611.1"/>
    <property type="molecule type" value="Genomic_DNA"/>
</dbReference>
<dbReference type="PIR" id="S15724">
    <property type="entry name" value="PWNTBZ"/>
</dbReference>
<dbReference type="SMR" id="P26530"/>
<dbReference type="GO" id="GO:0009535">
    <property type="term" value="C:chloroplast thylakoid membrane"/>
    <property type="evidence" value="ECO:0007669"/>
    <property type="project" value="UniProtKB-SubCell"/>
</dbReference>
<dbReference type="GO" id="GO:0005739">
    <property type="term" value="C:mitochondrion"/>
    <property type="evidence" value="ECO:0007669"/>
    <property type="project" value="GOC"/>
</dbReference>
<dbReference type="GO" id="GO:0045259">
    <property type="term" value="C:proton-transporting ATP synthase complex"/>
    <property type="evidence" value="ECO:0007669"/>
    <property type="project" value="UniProtKB-KW"/>
</dbReference>
<dbReference type="GO" id="GO:0005524">
    <property type="term" value="F:ATP binding"/>
    <property type="evidence" value="ECO:0007669"/>
    <property type="project" value="UniProtKB-UniRule"/>
</dbReference>
<dbReference type="GO" id="GO:0016887">
    <property type="term" value="F:ATP hydrolysis activity"/>
    <property type="evidence" value="ECO:0007669"/>
    <property type="project" value="InterPro"/>
</dbReference>
<dbReference type="GO" id="GO:0046933">
    <property type="term" value="F:proton-transporting ATP synthase activity, rotational mechanism"/>
    <property type="evidence" value="ECO:0007669"/>
    <property type="project" value="UniProtKB-UniRule"/>
</dbReference>
<dbReference type="GO" id="GO:0042776">
    <property type="term" value="P:proton motive force-driven mitochondrial ATP synthesis"/>
    <property type="evidence" value="ECO:0007669"/>
    <property type="project" value="TreeGrafter"/>
</dbReference>
<dbReference type="CDD" id="cd18110">
    <property type="entry name" value="ATP-synt_F1_beta_C"/>
    <property type="match status" value="1"/>
</dbReference>
<dbReference type="CDD" id="cd18115">
    <property type="entry name" value="ATP-synt_F1_beta_N"/>
    <property type="match status" value="1"/>
</dbReference>
<dbReference type="CDD" id="cd01133">
    <property type="entry name" value="F1-ATPase_beta_CD"/>
    <property type="match status" value="1"/>
</dbReference>
<dbReference type="FunFam" id="1.10.1140.10:FF:000001">
    <property type="entry name" value="ATP synthase subunit beta"/>
    <property type="match status" value="1"/>
</dbReference>
<dbReference type="FunFam" id="3.40.50.12240:FF:000006">
    <property type="entry name" value="ATP synthase subunit beta"/>
    <property type="match status" value="1"/>
</dbReference>
<dbReference type="FunFam" id="3.40.50.300:FF:000004">
    <property type="entry name" value="ATP synthase subunit beta"/>
    <property type="match status" value="1"/>
</dbReference>
<dbReference type="FunFam" id="2.40.10.170:FF:000002">
    <property type="entry name" value="ATP synthase subunit beta, chloroplastic"/>
    <property type="match status" value="1"/>
</dbReference>
<dbReference type="Gene3D" id="2.40.10.170">
    <property type="match status" value="1"/>
</dbReference>
<dbReference type="Gene3D" id="1.10.1140.10">
    <property type="entry name" value="Bovine Mitochondrial F1-atpase, Atp Synthase Beta Chain, Chain D, domain 3"/>
    <property type="match status" value="1"/>
</dbReference>
<dbReference type="Gene3D" id="3.40.50.300">
    <property type="entry name" value="P-loop containing nucleotide triphosphate hydrolases"/>
    <property type="match status" value="1"/>
</dbReference>
<dbReference type="HAMAP" id="MF_01347">
    <property type="entry name" value="ATP_synth_beta_bact"/>
    <property type="match status" value="1"/>
</dbReference>
<dbReference type="InterPro" id="IPR003593">
    <property type="entry name" value="AAA+_ATPase"/>
</dbReference>
<dbReference type="InterPro" id="IPR055190">
    <property type="entry name" value="ATP-synt_VA_C"/>
</dbReference>
<dbReference type="InterPro" id="IPR005722">
    <property type="entry name" value="ATP_synth_F1_bsu"/>
</dbReference>
<dbReference type="InterPro" id="IPR020003">
    <property type="entry name" value="ATPase_a/bsu_AS"/>
</dbReference>
<dbReference type="InterPro" id="IPR050053">
    <property type="entry name" value="ATPase_alpha/beta_chains"/>
</dbReference>
<dbReference type="InterPro" id="IPR004100">
    <property type="entry name" value="ATPase_F1/V1/A1_a/bsu_N"/>
</dbReference>
<dbReference type="InterPro" id="IPR036121">
    <property type="entry name" value="ATPase_F1/V1/A1_a/bsu_N_sf"/>
</dbReference>
<dbReference type="InterPro" id="IPR000194">
    <property type="entry name" value="ATPase_F1/V1/A1_a/bsu_nucl-bd"/>
</dbReference>
<dbReference type="InterPro" id="IPR024034">
    <property type="entry name" value="ATPase_F1/V1_b/a_C"/>
</dbReference>
<dbReference type="InterPro" id="IPR027417">
    <property type="entry name" value="P-loop_NTPase"/>
</dbReference>
<dbReference type="NCBIfam" id="TIGR01039">
    <property type="entry name" value="atpD"/>
    <property type="match status" value="1"/>
</dbReference>
<dbReference type="PANTHER" id="PTHR15184">
    <property type="entry name" value="ATP SYNTHASE"/>
    <property type="match status" value="1"/>
</dbReference>
<dbReference type="PANTHER" id="PTHR15184:SF71">
    <property type="entry name" value="ATP SYNTHASE SUBUNIT BETA, MITOCHONDRIAL"/>
    <property type="match status" value="1"/>
</dbReference>
<dbReference type="Pfam" id="PF00006">
    <property type="entry name" value="ATP-synt_ab"/>
    <property type="match status" value="1"/>
</dbReference>
<dbReference type="Pfam" id="PF02874">
    <property type="entry name" value="ATP-synt_ab_N"/>
    <property type="match status" value="1"/>
</dbReference>
<dbReference type="Pfam" id="PF22919">
    <property type="entry name" value="ATP-synt_VA_C"/>
    <property type="match status" value="1"/>
</dbReference>
<dbReference type="SMART" id="SM00382">
    <property type="entry name" value="AAA"/>
    <property type="match status" value="1"/>
</dbReference>
<dbReference type="SUPFAM" id="SSF47917">
    <property type="entry name" value="C-terminal domain of alpha and beta subunits of F1 ATP synthase"/>
    <property type="match status" value="1"/>
</dbReference>
<dbReference type="SUPFAM" id="SSF50615">
    <property type="entry name" value="N-terminal domain of alpha and beta subunits of F1 ATP synthase"/>
    <property type="match status" value="1"/>
</dbReference>
<dbReference type="SUPFAM" id="SSF52540">
    <property type="entry name" value="P-loop containing nucleoside triphosphate hydrolases"/>
    <property type="match status" value="1"/>
</dbReference>
<dbReference type="PROSITE" id="PS00152">
    <property type="entry name" value="ATPASE_ALPHA_BETA"/>
    <property type="match status" value="1"/>
</dbReference>
<organism>
    <name type="scientific">Nicotiana rustica</name>
    <name type="common">Aztec tobacco</name>
    <dbReference type="NCBI Taxonomy" id="4093"/>
    <lineage>
        <taxon>Eukaryota</taxon>
        <taxon>Viridiplantae</taxon>
        <taxon>Streptophyta</taxon>
        <taxon>Embryophyta</taxon>
        <taxon>Tracheophyta</taxon>
        <taxon>Spermatophyta</taxon>
        <taxon>Magnoliopsida</taxon>
        <taxon>eudicotyledons</taxon>
        <taxon>Gunneridae</taxon>
        <taxon>Pentapetalae</taxon>
        <taxon>asterids</taxon>
        <taxon>lamiids</taxon>
        <taxon>Solanales</taxon>
        <taxon>Solanaceae</taxon>
        <taxon>Nicotianoideae</taxon>
        <taxon>Nicotianeae</taxon>
        <taxon>Nicotiana</taxon>
    </lineage>
</organism>
<feature type="chain" id="PRO_0000144532" description="ATP synthase subunit beta, chloroplastic">
    <location>
        <begin position="1"/>
        <end position="498"/>
    </location>
</feature>
<feature type="binding site" evidence="1">
    <location>
        <begin position="172"/>
        <end position="179"/>
    </location>
    <ligand>
        <name>ATP</name>
        <dbReference type="ChEBI" id="CHEBI:30616"/>
    </ligand>
</feature>
<gene>
    <name evidence="1" type="primary">atpB</name>
</gene>
<protein>
    <recommendedName>
        <fullName evidence="1">ATP synthase subunit beta, chloroplastic</fullName>
        <ecNumber evidence="1">7.1.2.2</ecNumber>
    </recommendedName>
    <alternativeName>
        <fullName evidence="1">ATP synthase F1 sector subunit beta</fullName>
    </alternativeName>
    <alternativeName>
        <fullName evidence="1">F-ATPase subunit beta</fullName>
    </alternativeName>
</protein>
<keyword id="KW-0066">ATP synthesis</keyword>
<keyword id="KW-0067">ATP-binding</keyword>
<keyword id="KW-0139">CF(1)</keyword>
<keyword id="KW-0150">Chloroplast</keyword>
<keyword id="KW-0375">Hydrogen ion transport</keyword>
<keyword id="KW-0406">Ion transport</keyword>
<keyword id="KW-0472">Membrane</keyword>
<keyword id="KW-0547">Nucleotide-binding</keyword>
<keyword id="KW-0934">Plastid</keyword>
<keyword id="KW-0793">Thylakoid</keyword>
<keyword id="KW-1278">Translocase</keyword>
<keyword id="KW-0813">Transport</keyword>
<evidence type="ECO:0000255" key="1">
    <source>
        <dbReference type="HAMAP-Rule" id="MF_01347"/>
    </source>
</evidence>
<name>ATPB_NICRU</name>